<reference key="1">
    <citation type="journal article" date="2005" name="Proc. Natl. Acad. Sci. U.S.A.">
        <title>Genome analysis of multiple pathogenic isolates of Streptococcus agalactiae: implications for the microbial 'pan-genome'.</title>
        <authorList>
            <person name="Tettelin H."/>
            <person name="Masignani V."/>
            <person name="Cieslewicz M.J."/>
            <person name="Donati C."/>
            <person name="Medini D."/>
            <person name="Ward N.L."/>
            <person name="Angiuoli S.V."/>
            <person name="Crabtree J."/>
            <person name="Jones A.L."/>
            <person name="Durkin A.S."/>
            <person name="DeBoy R.T."/>
            <person name="Davidsen T.M."/>
            <person name="Mora M."/>
            <person name="Scarselli M."/>
            <person name="Margarit y Ros I."/>
            <person name="Peterson J.D."/>
            <person name="Hauser C.R."/>
            <person name="Sundaram J.P."/>
            <person name="Nelson W.C."/>
            <person name="Madupu R."/>
            <person name="Brinkac L.M."/>
            <person name="Dodson R.J."/>
            <person name="Rosovitz M.J."/>
            <person name="Sullivan S.A."/>
            <person name="Daugherty S.C."/>
            <person name="Haft D.H."/>
            <person name="Selengut J."/>
            <person name="Gwinn M.L."/>
            <person name="Zhou L."/>
            <person name="Zafar N."/>
            <person name="Khouri H."/>
            <person name="Radune D."/>
            <person name="Dimitrov G."/>
            <person name="Watkins K."/>
            <person name="O'Connor K.J."/>
            <person name="Smith S."/>
            <person name="Utterback T.R."/>
            <person name="White O."/>
            <person name="Rubens C.E."/>
            <person name="Grandi G."/>
            <person name="Madoff L.C."/>
            <person name="Kasper D.L."/>
            <person name="Telford J.L."/>
            <person name="Wessels M.R."/>
            <person name="Rappuoli R."/>
            <person name="Fraser C.M."/>
        </authorList>
    </citation>
    <scope>NUCLEOTIDE SEQUENCE [LARGE SCALE GENOMIC DNA]</scope>
    <source>
        <strain>ATCC 27591 / A909 / CDC SS700</strain>
    </source>
</reference>
<gene>
    <name evidence="1" type="primary">secA1</name>
    <name type="ordered locus">SAK_1699</name>
</gene>
<accession>Q3JZK2</accession>
<sequence>MANILRTVIENDKGELKKLDKIAKKVDSYADHMAALSDEALQAKTPEFKERYQNGETLDQLLPEAFAVVREASKRVLGLYPYHVQIMGGIVLHHGDIPEMRTGEGKTLTATMPVYLNAISGLGVHVITVNEYLSTRDATEMGEVYSWLGLSVGINLAAKSPFEKREAYNCDITYSTNAEVGFDYLRDNMVVRQEDMVQRPLNYALVDEVDSVLIDEARTPLIVSGPVSSEMNQLYTRADMFVKTLNSDDYIIDVPTKTIGLSDTGIDKAENYFHLNNLYDLENVALTHYIDNALRANYIMLLNIDYVVSEEQEILIVDQFTGRTMEGRRFSDGLHQAIEAKESVPIQEESKTSASITYQNMFRMYHKLAGMTGTGKTEEEEFREIYNMRVIPIPTNRPVQRIDHSDLLYPTLDSKFRAVVADVKERYEQGQPVLVGTVAVETSDLISRKLVAAGVPHEVLNAKNHFKEAQIIMNAGQRGAVTIATNMAGRGTDIKLGEGVRELGGLCVIGTERHESRRIDNQLRGRSGRQGDPGESQFYLSLEDDLMRRFGTDRIKVVLERMNLAEDDTVIKSKMLTRQVESAQRRVEGNNYDTRKQVLQYDDVMREQREIIYANRREVITAERDLGPELKGMIKRTIKRAVDAHSRSDKNTAAEAIVNFARSALLDEEAITVSELRGLKEAEIKELLYERALAVYEQQIAKLKDPEAIIEFQKVLILMVVDNQWTEHIDALDQLRNSVGLRGYAQNNPIVEYQSEGFRMFQDMIGSIEFDVTRTLMKAQIHEQERERASQHATTTAEQNISAQHVPMNNESPEYQGIKRNDKCPCGSGMKFKNCHGLRCLQ</sequence>
<comment type="function">
    <text evidence="1">Part of the Sec protein translocase complex. Interacts with the SecYEG preprotein conducting channel. Has a central role in coupling the hydrolysis of ATP to the transfer of proteins into and across the cell membrane, serving as an ATP-driven molecular motor driving the stepwise translocation of polypeptide chains across the membrane.</text>
</comment>
<comment type="catalytic activity">
    <reaction evidence="1">
        <text>ATP + H2O + cellular proteinSide 1 = ADP + phosphate + cellular proteinSide 2.</text>
        <dbReference type="EC" id="7.4.2.8"/>
    </reaction>
</comment>
<comment type="cofactor">
    <cofactor evidence="1">
        <name>Zn(2+)</name>
        <dbReference type="ChEBI" id="CHEBI:29105"/>
    </cofactor>
    <text evidence="1">May bind 1 zinc ion per subunit.</text>
</comment>
<comment type="subunit">
    <text evidence="1">Monomer and homodimer. Part of the essential Sec protein translocation apparatus which comprises SecA, SecYEG and auxiliary proteins SecDF. Other proteins may also be involved.</text>
</comment>
<comment type="subcellular location">
    <subcellularLocation>
        <location evidence="1">Cell membrane</location>
        <topology evidence="1">Peripheral membrane protein</topology>
        <orientation evidence="1">Cytoplasmic side</orientation>
    </subcellularLocation>
    <subcellularLocation>
        <location evidence="1">Cytoplasm</location>
    </subcellularLocation>
    <text evidence="1">Distribution is 50-50.</text>
</comment>
<comment type="similarity">
    <text evidence="1">Belongs to the SecA family.</text>
</comment>
<proteinExistence type="inferred from homology"/>
<keyword id="KW-0067">ATP-binding</keyword>
<keyword id="KW-1003">Cell membrane</keyword>
<keyword id="KW-0963">Cytoplasm</keyword>
<keyword id="KW-0472">Membrane</keyword>
<keyword id="KW-0479">Metal-binding</keyword>
<keyword id="KW-0547">Nucleotide-binding</keyword>
<keyword id="KW-0653">Protein transport</keyword>
<keyword id="KW-1278">Translocase</keyword>
<keyword id="KW-0811">Translocation</keyword>
<keyword id="KW-0813">Transport</keyword>
<keyword id="KW-0862">Zinc</keyword>
<organism>
    <name type="scientific">Streptococcus agalactiae serotype Ia (strain ATCC 27591 / A909 / CDC SS700)</name>
    <dbReference type="NCBI Taxonomy" id="205921"/>
    <lineage>
        <taxon>Bacteria</taxon>
        <taxon>Bacillati</taxon>
        <taxon>Bacillota</taxon>
        <taxon>Bacilli</taxon>
        <taxon>Lactobacillales</taxon>
        <taxon>Streptococcaceae</taxon>
        <taxon>Streptococcus</taxon>
    </lineage>
</organism>
<feature type="chain" id="PRO_0000318435" description="Protein translocase subunit SecA 1">
    <location>
        <begin position="1"/>
        <end position="842"/>
    </location>
</feature>
<feature type="binding site" evidence="1">
    <location>
        <position position="85"/>
    </location>
    <ligand>
        <name>ATP</name>
        <dbReference type="ChEBI" id="CHEBI:30616"/>
    </ligand>
</feature>
<feature type="binding site" evidence="1">
    <location>
        <begin position="103"/>
        <end position="107"/>
    </location>
    <ligand>
        <name>ATP</name>
        <dbReference type="ChEBI" id="CHEBI:30616"/>
    </ligand>
</feature>
<feature type="binding site" evidence="1">
    <location>
        <position position="493"/>
    </location>
    <ligand>
        <name>ATP</name>
        <dbReference type="ChEBI" id="CHEBI:30616"/>
    </ligand>
</feature>
<feature type="binding site" evidence="1">
    <location>
        <position position="824"/>
    </location>
    <ligand>
        <name>Zn(2+)</name>
        <dbReference type="ChEBI" id="CHEBI:29105"/>
    </ligand>
</feature>
<feature type="binding site" evidence="1">
    <location>
        <position position="826"/>
    </location>
    <ligand>
        <name>Zn(2+)</name>
        <dbReference type="ChEBI" id="CHEBI:29105"/>
    </ligand>
</feature>
<feature type="binding site" evidence="1">
    <location>
        <position position="835"/>
    </location>
    <ligand>
        <name>Zn(2+)</name>
        <dbReference type="ChEBI" id="CHEBI:29105"/>
    </ligand>
</feature>
<feature type="binding site" evidence="1">
    <location>
        <position position="836"/>
    </location>
    <ligand>
        <name>Zn(2+)</name>
        <dbReference type="ChEBI" id="CHEBI:29105"/>
    </ligand>
</feature>
<evidence type="ECO:0000255" key="1">
    <source>
        <dbReference type="HAMAP-Rule" id="MF_01382"/>
    </source>
</evidence>
<protein>
    <recommendedName>
        <fullName evidence="1">Protein translocase subunit SecA 1</fullName>
        <ecNumber evidence="1">7.4.2.8</ecNumber>
    </recommendedName>
</protein>
<name>SECA1_STRA1</name>
<dbReference type="EC" id="7.4.2.8" evidence="1"/>
<dbReference type="EMBL" id="CP000114">
    <property type="protein sequence ID" value="ABA44363.1"/>
    <property type="molecule type" value="Genomic_DNA"/>
</dbReference>
<dbReference type="SMR" id="Q3JZK2"/>
<dbReference type="KEGG" id="sak:SAK_1699"/>
<dbReference type="HOGENOM" id="CLU_005314_3_0_9"/>
<dbReference type="GO" id="GO:0031522">
    <property type="term" value="C:cell envelope Sec protein transport complex"/>
    <property type="evidence" value="ECO:0007669"/>
    <property type="project" value="TreeGrafter"/>
</dbReference>
<dbReference type="GO" id="GO:0005829">
    <property type="term" value="C:cytosol"/>
    <property type="evidence" value="ECO:0007669"/>
    <property type="project" value="TreeGrafter"/>
</dbReference>
<dbReference type="GO" id="GO:0005886">
    <property type="term" value="C:plasma membrane"/>
    <property type="evidence" value="ECO:0007669"/>
    <property type="project" value="UniProtKB-SubCell"/>
</dbReference>
<dbReference type="GO" id="GO:0005524">
    <property type="term" value="F:ATP binding"/>
    <property type="evidence" value="ECO:0007669"/>
    <property type="project" value="UniProtKB-UniRule"/>
</dbReference>
<dbReference type="GO" id="GO:0046872">
    <property type="term" value="F:metal ion binding"/>
    <property type="evidence" value="ECO:0007669"/>
    <property type="project" value="UniProtKB-KW"/>
</dbReference>
<dbReference type="GO" id="GO:0008564">
    <property type="term" value="F:protein-exporting ATPase activity"/>
    <property type="evidence" value="ECO:0007669"/>
    <property type="project" value="UniProtKB-EC"/>
</dbReference>
<dbReference type="GO" id="GO:0065002">
    <property type="term" value="P:intracellular protein transmembrane transport"/>
    <property type="evidence" value="ECO:0007669"/>
    <property type="project" value="UniProtKB-UniRule"/>
</dbReference>
<dbReference type="GO" id="GO:0017038">
    <property type="term" value="P:protein import"/>
    <property type="evidence" value="ECO:0007669"/>
    <property type="project" value="InterPro"/>
</dbReference>
<dbReference type="GO" id="GO:0006605">
    <property type="term" value="P:protein targeting"/>
    <property type="evidence" value="ECO:0007669"/>
    <property type="project" value="UniProtKB-UniRule"/>
</dbReference>
<dbReference type="GO" id="GO:0043952">
    <property type="term" value="P:protein transport by the Sec complex"/>
    <property type="evidence" value="ECO:0007669"/>
    <property type="project" value="TreeGrafter"/>
</dbReference>
<dbReference type="CDD" id="cd17928">
    <property type="entry name" value="DEXDc_SecA"/>
    <property type="match status" value="1"/>
</dbReference>
<dbReference type="CDD" id="cd18803">
    <property type="entry name" value="SF2_C_secA"/>
    <property type="match status" value="1"/>
</dbReference>
<dbReference type="FunFam" id="1.10.3060.10:FF:000002">
    <property type="entry name" value="Preprotein translocase subunit SecA"/>
    <property type="match status" value="1"/>
</dbReference>
<dbReference type="FunFam" id="3.40.50.300:FF:000429">
    <property type="entry name" value="Preprotein translocase subunit SecA"/>
    <property type="match status" value="1"/>
</dbReference>
<dbReference type="FunFam" id="3.90.1440.10:FF:000001">
    <property type="entry name" value="Preprotein translocase subunit SecA"/>
    <property type="match status" value="1"/>
</dbReference>
<dbReference type="Gene3D" id="1.10.3060.10">
    <property type="entry name" value="Helical scaffold and wing domains of SecA"/>
    <property type="match status" value="1"/>
</dbReference>
<dbReference type="Gene3D" id="3.40.50.300">
    <property type="entry name" value="P-loop containing nucleotide triphosphate hydrolases"/>
    <property type="match status" value="3"/>
</dbReference>
<dbReference type="Gene3D" id="3.90.1440.10">
    <property type="entry name" value="SecA, preprotein cross-linking domain"/>
    <property type="match status" value="1"/>
</dbReference>
<dbReference type="HAMAP" id="MF_01382">
    <property type="entry name" value="SecA"/>
    <property type="match status" value="1"/>
</dbReference>
<dbReference type="InterPro" id="IPR014001">
    <property type="entry name" value="Helicase_ATP-bd"/>
</dbReference>
<dbReference type="InterPro" id="IPR001650">
    <property type="entry name" value="Helicase_C-like"/>
</dbReference>
<dbReference type="InterPro" id="IPR027417">
    <property type="entry name" value="P-loop_NTPase"/>
</dbReference>
<dbReference type="InterPro" id="IPR004027">
    <property type="entry name" value="SEC_C_motif"/>
</dbReference>
<dbReference type="InterPro" id="IPR000185">
    <property type="entry name" value="SecA"/>
</dbReference>
<dbReference type="InterPro" id="IPR020937">
    <property type="entry name" value="SecA_CS"/>
</dbReference>
<dbReference type="InterPro" id="IPR011115">
    <property type="entry name" value="SecA_DEAD"/>
</dbReference>
<dbReference type="InterPro" id="IPR014018">
    <property type="entry name" value="SecA_motor_DEAD"/>
</dbReference>
<dbReference type="InterPro" id="IPR011130">
    <property type="entry name" value="SecA_preprotein_X-link_dom"/>
</dbReference>
<dbReference type="InterPro" id="IPR044722">
    <property type="entry name" value="SecA_SF2_C"/>
</dbReference>
<dbReference type="InterPro" id="IPR011116">
    <property type="entry name" value="SecA_Wing/Scaffold"/>
</dbReference>
<dbReference type="InterPro" id="IPR036266">
    <property type="entry name" value="SecA_Wing/Scaffold_sf"/>
</dbReference>
<dbReference type="InterPro" id="IPR036670">
    <property type="entry name" value="SecA_X-link_sf"/>
</dbReference>
<dbReference type="NCBIfam" id="NF006630">
    <property type="entry name" value="PRK09200.1"/>
    <property type="match status" value="1"/>
</dbReference>
<dbReference type="NCBIfam" id="TIGR00963">
    <property type="entry name" value="secA"/>
    <property type="match status" value="1"/>
</dbReference>
<dbReference type="PANTHER" id="PTHR30612:SF0">
    <property type="entry name" value="CHLOROPLAST PROTEIN-TRANSPORTING ATPASE"/>
    <property type="match status" value="1"/>
</dbReference>
<dbReference type="PANTHER" id="PTHR30612">
    <property type="entry name" value="SECA INNER MEMBRANE COMPONENT OF SEC PROTEIN SECRETION SYSTEM"/>
    <property type="match status" value="1"/>
</dbReference>
<dbReference type="Pfam" id="PF21090">
    <property type="entry name" value="P-loop_SecA"/>
    <property type="match status" value="2"/>
</dbReference>
<dbReference type="Pfam" id="PF02810">
    <property type="entry name" value="SEC-C"/>
    <property type="match status" value="1"/>
</dbReference>
<dbReference type="Pfam" id="PF07517">
    <property type="entry name" value="SecA_DEAD"/>
    <property type="match status" value="1"/>
</dbReference>
<dbReference type="Pfam" id="PF01043">
    <property type="entry name" value="SecA_PP_bind"/>
    <property type="match status" value="1"/>
</dbReference>
<dbReference type="Pfam" id="PF07516">
    <property type="entry name" value="SecA_SW"/>
    <property type="match status" value="1"/>
</dbReference>
<dbReference type="PRINTS" id="PR00906">
    <property type="entry name" value="SECA"/>
</dbReference>
<dbReference type="SMART" id="SM00957">
    <property type="entry name" value="SecA_DEAD"/>
    <property type="match status" value="1"/>
</dbReference>
<dbReference type="SMART" id="SM00958">
    <property type="entry name" value="SecA_PP_bind"/>
    <property type="match status" value="1"/>
</dbReference>
<dbReference type="SUPFAM" id="SSF81886">
    <property type="entry name" value="Helical scaffold and wing domains of SecA"/>
    <property type="match status" value="1"/>
</dbReference>
<dbReference type="SUPFAM" id="SSF52540">
    <property type="entry name" value="P-loop containing nucleoside triphosphate hydrolases"/>
    <property type="match status" value="2"/>
</dbReference>
<dbReference type="SUPFAM" id="SSF81767">
    <property type="entry name" value="Pre-protein crosslinking domain of SecA"/>
    <property type="match status" value="1"/>
</dbReference>
<dbReference type="PROSITE" id="PS01312">
    <property type="entry name" value="SECA"/>
    <property type="match status" value="1"/>
</dbReference>
<dbReference type="PROSITE" id="PS51196">
    <property type="entry name" value="SECA_MOTOR_DEAD"/>
    <property type="match status" value="1"/>
</dbReference>